<keyword id="KW-0028">Amino-acid biosynthesis</keyword>
<keyword id="KW-0368">Histidine biosynthesis</keyword>
<keyword id="KW-0378">Hydrolase</keyword>
<keyword id="KW-0486">Methionine biosynthesis</keyword>
<keyword id="KW-0511">Multifunctional enzyme</keyword>
<keyword id="KW-0521">NADP</keyword>
<keyword id="KW-0554">One-carbon metabolism</keyword>
<keyword id="KW-0560">Oxidoreductase</keyword>
<keyword id="KW-0658">Purine biosynthesis</keyword>
<protein>
    <recommendedName>
        <fullName evidence="1">Bifunctional protein FolD 1</fullName>
    </recommendedName>
    <domain>
        <recommendedName>
            <fullName evidence="1">Methylenetetrahydrofolate dehydrogenase</fullName>
            <ecNumber evidence="1">1.5.1.5</ecNumber>
        </recommendedName>
    </domain>
    <domain>
        <recommendedName>
            <fullName evidence="1">Methenyltetrahydrofolate cyclohydrolase</fullName>
            <ecNumber evidence="1">3.5.4.9</ecNumber>
        </recommendedName>
    </domain>
</protein>
<dbReference type="EC" id="1.5.1.5" evidence="1"/>
<dbReference type="EC" id="3.5.4.9" evidence="1"/>
<dbReference type="EMBL" id="CP000058">
    <property type="protein sequence ID" value="AAZ37137.1"/>
    <property type="molecule type" value="Genomic_DNA"/>
</dbReference>
<dbReference type="SMR" id="Q48KZ8"/>
<dbReference type="KEGG" id="psp:PSPPH_1687"/>
<dbReference type="eggNOG" id="COG0190">
    <property type="taxonomic scope" value="Bacteria"/>
</dbReference>
<dbReference type="HOGENOM" id="CLU_034045_2_1_6"/>
<dbReference type="UniPathway" id="UPA00193"/>
<dbReference type="Proteomes" id="UP000000551">
    <property type="component" value="Chromosome"/>
</dbReference>
<dbReference type="GO" id="GO:0005829">
    <property type="term" value="C:cytosol"/>
    <property type="evidence" value="ECO:0007669"/>
    <property type="project" value="TreeGrafter"/>
</dbReference>
<dbReference type="GO" id="GO:0004477">
    <property type="term" value="F:methenyltetrahydrofolate cyclohydrolase activity"/>
    <property type="evidence" value="ECO:0007669"/>
    <property type="project" value="UniProtKB-UniRule"/>
</dbReference>
<dbReference type="GO" id="GO:0004488">
    <property type="term" value="F:methylenetetrahydrofolate dehydrogenase (NADP+) activity"/>
    <property type="evidence" value="ECO:0007669"/>
    <property type="project" value="UniProtKB-UniRule"/>
</dbReference>
<dbReference type="GO" id="GO:0000105">
    <property type="term" value="P:L-histidine biosynthetic process"/>
    <property type="evidence" value="ECO:0007669"/>
    <property type="project" value="UniProtKB-KW"/>
</dbReference>
<dbReference type="GO" id="GO:0009086">
    <property type="term" value="P:methionine biosynthetic process"/>
    <property type="evidence" value="ECO:0007669"/>
    <property type="project" value="UniProtKB-KW"/>
</dbReference>
<dbReference type="GO" id="GO:0006164">
    <property type="term" value="P:purine nucleotide biosynthetic process"/>
    <property type="evidence" value="ECO:0007669"/>
    <property type="project" value="UniProtKB-KW"/>
</dbReference>
<dbReference type="GO" id="GO:0035999">
    <property type="term" value="P:tetrahydrofolate interconversion"/>
    <property type="evidence" value="ECO:0007669"/>
    <property type="project" value="UniProtKB-UniRule"/>
</dbReference>
<dbReference type="CDD" id="cd01080">
    <property type="entry name" value="NAD_bind_m-THF_DH_Cyclohyd"/>
    <property type="match status" value="1"/>
</dbReference>
<dbReference type="FunFam" id="3.40.50.10860:FF:000001">
    <property type="entry name" value="Bifunctional protein FolD"/>
    <property type="match status" value="1"/>
</dbReference>
<dbReference type="FunFam" id="3.40.50.720:FF:000006">
    <property type="entry name" value="Bifunctional protein FolD"/>
    <property type="match status" value="1"/>
</dbReference>
<dbReference type="Gene3D" id="3.40.50.10860">
    <property type="entry name" value="Leucine Dehydrogenase, chain A, domain 1"/>
    <property type="match status" value="1"/>
</dbReference>
<dbReference type="Gene3D" id="3.40.50.720">
    <property type="entry name" value="NAD(P)-binding Rossmann-like Domain"/>
    <property type="match status" value="1"/>
</dbReference>
<dbReference type="HAMAP" id="MF_01576">
    <property type="entry name" value="THF_DHG_CYH"/>
    <property type="match status" value="1"/>
</dbReference>
<dbReference type="InterPro" id="IPR046346">
    <property type="entry name" value="Aminoacid_DH-like_N_sf"/>
</dbReference>
<dbReference type="InterPro" id="IPR036291">
    <property type="entry name" value="NAD(P)-bd_dom_sf"/>
</dbReference>
<dbReference type="InterPro" id="IPR000672">
    <property type="entry name" value="THF_DH/CycHdrlase"/>
</dbReference>
<dbReference type="InterPro" id="IPR020630">
    <property type="entry name" value="THF_DH/CycHdrlase_cat_dom"/>
</dbReference>
<dbReference type="InterPro" id="IPR020631">
    <property type="entry name" value="THF_DH/CycHdrlase_NAD-bd_dom"/>
</dbReference>
<dbReference type="NCBIfam" id="NF008058">
    <property type="entry name" value="PRK10792.1"/>
    <property type="match status" value="1"/>
</dbReference>
<dbReference type="NCBIfam" id="NF010783">
    <property type="entry name" value="PRK14186.1"/>
    <property type="match status" value="1"/>
</dbReference>
<dbReference type="PANTHER" id="PTHR48099:SF5">
    <property type="entry name" value="C-1-TETRAHYDROFOLATE SYNTHASE, CYTOPLASMIC"/>
    <property type="match status" value="1"/>
</dbReference>
<dbReference type="PANTHER" id="PTHR48099">
    <property type="entry name" value="C-1-TETRAHYDROFOLATE SYNTHASE, CYTOPLASMIC-RELATED"/>
    <property type="match status" value="1"/>
</dbReference>
<dbReference type="Pfam" id="PF00763">
    <property type="entry name" value="THF_DHG_CYH"/>
    <property type="match status" value="1"/>
</dbReference>
<dbReference type="Pfam" id="PF02882">
    <property type="entry name" value="THF_DHG_CYH_C"/>
    <property type="match status" value="1"/>
</dbReference>
<dbReference type="PRINTS" id="PR00085">
    <property type="entry name" value="THFDHDRGNASE"/>
</dbReference>
<dbReference type="SUPFAM" id="SSF53223">
    <property type="entry name" value="Aminoacid dehydrogenase-like, N-terminal domain"/>
    <property type="match status" value="1"/>
</dbReference>
<dbReference type="SUPFAM" id="SSF51735">
    <property type="entry name" value="NAD(P)-binding Rossmann-fold domains"/>
    <property type="match status" value="1"/>
</dbReference>
<proteinExistence type="inferred from homology"/>
<gene>
    <name evidence="1" type="primary">folD1</name>
    <name type="ordered locus">PSPPH_1687</name>
</gene>
<reference key="1">
    <citation type="journal article" date="2005" name="J. Bacteriol.">
        <title>Whole-genome sequence analysis of Pseudomonas syringae pv. phaseolicola 1448A reveals divergence among pathovars in genes involved in virulence and transposition.</title>
        <authorList>
            <person name="Joardar V."/>
            <person name="Lindeberg M."/>
            <person name="Jackson R.W."/>
            <person name="Selengut J."/>
            <person name="Dodson R."/>
            <person name="Brinkac L.M."/>
            <person name="Daugherty S.C."/>
            <person name="DeBoy R.T."/>
            <person name="Durkin A.S."/>
            <person name="Gwinn Giglio M."/>
            <person name="Madupu R."/>
            <person name="Nelson W.C."/>
            <person name="Rosovitz M.J."/>
            <person name="Sullivan S.A."/>
            <person name="Crabtree J."/>
            <person name="Creasy T."/>
            <person name="Davidsen T.M."/>
            <person name="Haft D.H."/>
            <person name="Zafar N."/>
            <person name="Zhou L."/>
            <person name="Halpin R."/>
            <person name="Holley T."/>
            <person name="Khouri H.M."/>
            <person name="Feldblyum T.V."/>
            <person name="White O."/>
            <person name="Fraser C.M."/>
            <person name="Chatterjee A.K."/>
            <person name="Cartinhour S."/>
            <person name="Schneider D."/>
            <person name="Mansfield J.W."/>
            <person name="Collmer A."/>
            <person name="Buell R."/>
        </authorList>
    </citation>
    <scope>NUCLEOTIDE SEQUENCE [LARGE SCALE GENOMIC DNA]</scope>
    <source>
        <strain>1448A / Race 6</strain>
    </source>
</reference>
<organism>
    <name type="scientific">Pseudomonas savastanoi pv. phaseolicola (strain 1448A / Race 6)</name>
    <name type="common">Pseudomonas syringae pv. phaseolicola (strain 1448A / Race 6)</name>
    <dbReference type="NCBI Taxonomy" id="264730"/>
    <lineage>
        <taxon>Bacteria</taxon>
        <taxon>Pseudomonadati</taxon>
        <taxon>Pseudomonadota</taxon>
        <taxon>Gammaproteobacteria</taxon>
        <taxon>Pseudomonadales</taxon>
        <taxon>Pseudomonadaceae</taxon>
        <taxon>Pseudomonas</taxon>
    </lineage>
</organism>
<accession>Q48KZ8</accession>
<feature type="chain" id="PRO_0000268448" description="Bifunctional protein FolD 1">
    <location>
        <begin position="1"/>
        <end position="284"/>
    </location>
</feature>
<feature type="binding site" evidence="1">
    <location>
        <begin position="166"/>
        <end position="168"/>
    </location>
    <ligand>
        <name>NADP(+)</name>
        <dbReference type="ChEBI" id="CHEBI:58349"/>
    </ligand>
</feature>
<feature type="binding site" evidence="1">
    <location>
        <position position="232"/>
    </location>
    <ligand>
        <name>NADP(+)</name>
        <dbReference type="ChEBI" id="CHEBI:58349"/>
    </ligand>
</feature>
<evidence type="ECO:0000255" key="1">
    <source>
        <dbReference type="HAMAP-Rule" id="MF_01576"/>
    </source>
</evidence>
<name>FOLD1_PSE14</name>
<sequence length="284" mass="30297">MTAKLIDGKAIAASLRQQIAKRVAERSQQGLRTPGLAVILVGSDPASQVYVSHKRKDCEEVGFISQAYDLPAETTQTALTDLIDRLNEDAAVDGILLQLPLPAHLDASLLLERIRPDKDVDGFHPYNVGRLAQRIPLLRPCTPKGIITLLESTGVDLYGLDAVVVGASNIVGRPMAMELLLAGCTVTVTHRFTKDLAGHVGRADLVVVAAGKPGLIKGEWIKPGAIVIDVGINRQDDGKLVGDVVYETALPRAGWITPVPGGVGPMTRACLLENTLYAAETLHD</sequence>
<comment type="function">
    <text evidence="1">Catalyzes the oxidation of 5,10-methylenetetrahydrofolate to 5,10-methenyltetrahydrofolate and then the hydrolysis of 5,10-methenyltetrahydrofolate to 10-formyltetrahydrofolate.</text>
</comment>
<comment type="catalytic activity">
    <reaction evidence="1">
        <text>(6R)-5,10-methylene-5,6,7,8-tetrahydrofolate + NADP(+) = (6R)-5,10-methenyltetrahydrofolate + NADPH</text>
        <dbReference type="Rhea" id="RHEA:22812"/>
        <dbReference type="ChEBI" id="CHEBI:15636"/>
        <dbReference type="ChEBI" id="CHEBI:57455"/>
        <dbReference type="ChEBI" id="CHEBI:57783"/>
        <dbReference type="ChEBI" id="CHEBI:58349"/>
        <dbReference type="EC" id="1.5.1.5"/>
    </reaction>
</comment>
<comment type="catalytic activity">
    <reaction evidence="1">
        <text>(6R)-5,10-methenyltetrahydrofolate + H2O = (6R)-10-formyltetrahydrofolate + H(+)</text>
        <dbReference type="Rhea" id="RHEA:23700"/>
        <dbReference type="ChEBI" id="CHEBI:15377"/>
        <dbReference type="ChEBI" id="CHEBI:15378"/>
        <dbReference type="ChEBI" id="CHEBI:57455"/>
        <dbReference type="ChEBI" id="CHEBI:195366"/>
        <dbReference type="EC" id="3.5.4.9"/>
    </reaction>
</comment>
<comment type="pathway">
    <text evidence="1">One-carbon metabolism; tetrahydrofolate interconversion.</text>
</comment>
<comment type="subunit">
    <text evidence="1">Homodimer.</text>
</comment>
<comment type="similarity">
    <text evidence="1">Belongs to the tetrahydrofolate dehydrogenase/cyclohydrolase family.</text>
</comment>